<gene>
    <name evidence="1" type="primary">hemF</name>
    <name type="ordered locus">Shew185_0033</name>
</gene>
<sequence>MSVPDAAVVKAFLLDLQNRICAGLQALDGQARFAADSWTRAEGGGGTSRVLTQGAVFEQAGVNFSHVTGAAMPASATAHRPELAGRSFEAMGVSLVIHPNNPYIPTTHANVRFFIAQKEGADPVWWFGGGFDLTPYYPFEEDVREWHQTSKDICAPFGDEVYPKYKKWCDEYFFLPHRNETRGVGGLFFDDLNQAGFEQSFSFMQAVGNGFLTAYAPIVERRKDTEFGERERQFQLYRRGRYVEFNLVYDRGTLFGLQTGGRTESILMSMPPLVRWQYAYTPEAGSPEADLYDNYLKPRDWV</sequence>
<protein>
    <recommendedName>
        <fullName evidence="1">Oxygen-dependent coproporphyrinogen-III oxidase</fullName>
        <shortName evidence="1">CPO</shortName>
        <shortName evidence="1">Coprogen oxidase</shortName>
        <shortName evidence="1">Coproporphyrinogenase</shortName>
        <ecNumber evidence="1">1.3.3.3</ecNumber>
    </recommendedName>
</protein>
<reference key="1">
    <citation type="submission" date="2007-07" db="EMBL/GenBank/DDBJ databases">
        <title>Complete sequence of chromosome of Shewanella baltica OS185.</title>
        <authorList>
            <consortium name="US DOE Joint Genome Institute"/>
            <person name="Copeland A."/>
            <person name="Lucas S."/>
            <person name="Lapidus A."/>
            <person name="Barry K."/>
            <person name="Glavina del Rio T."/>
            <person name="Dalin E."/>
            <person name="Tice H."/>
            <person name="Pitluck S."/>
            <person name="Sims D."/>
            <person name="Brettin T."/>
            <person name="Bruce D."/>
            <person name="Detter J.C."/>
            <person name="Han C."/>
            <person name="Schmutz J."/>
            <person name="Larimer F."/>
            <person name="Land M."/>
            <person name="Hauser L."/>
            <person name="Kyrpides N."/>
            <person name="Mikhailova N."/>
            <person name="Brettar I."/>
            <person name="Rodrigues J."/>
            <person name="Konstantinidis K."/>
            <person name="Tiedje J."/>
            <person name="Richardson P."/>
        </authorList>
    </citation>
    <scope>NUCLEOTIDE SEQUENCE [LARGE SCALE GENOMIC DNA]</scope>
    <source>
        <strain>OS185</strain>
    </source>
</reference>
<proteinExistence type="inferred from homology"/>
<name>HEM6_SHEB8</name>
<feature type="chain" id="PRO_1000019498" description="Oxygen-dependent coproporphyrinogen-III oxidase">
    <location>
        <begin position="1"/>
        <end position="302"/>
    </location>
</feature>
<feature type="region of interest" description="Important for dimerization" evidence="1">
    <location>
        <begin position="242"/>
        <end position="277"/>
    </location>
</feature>
<feature type="active site" description="Proton donor" evidence="1">
    <location>
        <position position="108"/>
    </location>
</feature>
<feature type="binding site" evidence="1">
    <location>
        <position position="94"/>
    </location>
    <ligand>
        <name>substrate</name>
    </ligand>
</feature>
<feature type="binding site" evidence="1">
    <location>
        <position position="98"/>
    </location>
    <ligand>
        <name>a divalent metal cation</name>
        <dbReference type="ChEBI" id="CHEBI:60240"/>
    </ligand>
</feature>
<feature type="binding site" evidence="1">
    <location>
        <position position="108"/>
    </location>
    <ligand>
        <name>a divalent metal cation</name>
        <dbReference type="ChEBI" id="CHEBI:60240"/>
    </ligand>
</feature>
<feature type="binding site" evidence="1">
    <location>
        <begin position="110"/>
        <end position="112"/>
    </location>
    <ligand>
        <name>substrate</name>
    </ligand>
</feature>
<feature type="binding site" evidence="1">
    <location>
        <position position="147"/>
    </location>
    <ligand>
        <name>a divalent metal cation</name>
        <dbReference type="ChEBI" id="CHEBI:60240"/>
    </ligand>
</feature>
<feature type="binding site" evidence="1">
    <location>
        <position position="177"/>
    </location>
    <ligand>
        <name>a divalent metal cation</name>
        <dbReference type="ChEBI" id="CHEBI:60240"/>
    </ligand>
</feature>
<feature type="binding site" evidence="1">
    <location>
        <begin position="260"/>
        <end position="262"/>
    </location>
    <ligand>
        <name>substrate</name>
    </ligand>
</feature>
<feature type="site" description="Important for dimerization" evidence="1">
    <location>
        <position position="177"/>
    </location>
</feature>
<accession>A6WHB7</accession>
<keyword id="KW-0963">Cytoplasm</keyword>
<keyword id="KW-0350">Heme biosynthesis</keyword>
<keyword id="KW-0479">Metal-binding</keyword>
<keyword id="KW-0560">Oxidoreductase</keyword>
<keyword id="KW-0627">Porphyrin biosynthesis</keyword>
<evidence type="ECO:0000255" key="1">
    <source>
        <dbReference type="HAMAP-Rule" id="MF_00333"/>
    </source>
</evidence>
<comment type="function">
    <text evidence="1">Involved in the heme biosynthesis. Catalyzes the aerobic oxidative decarboxylation of propionate groups of rings A and B of coproporphyrinogen-III to yield the vinyl groups in protoporphyrinogen-IX.</text>
</comment>
<comment type="catalytic activity">
    <reaction evidence="1">
        <text>coproporphyrinogen III + O2 + 2 H(+) = protoporphyrinogen IX + 2 CO2 + 2 H2O</text>
        <dbReference type="Rhea" id="RHEA:18257"/>
        <dbReference type="ChEBI" id="CHEBI:15377"/>
        <dbReference type="ChEBI" id="CHEBI:15378"/>
        <dbReference type="ChEBI" id="CHEBI:15379"/>
        <dbReference type="ChEBI" id="CHEBI:16526"/>
        <dbReference type="ChEBI" id="CHEBI:57307"/>
        <dbReference type="ChEBI" id="CHEBI:57309"/>
        <dbReference type="EC" id="1.3.3.3"/>
    </reaction>
</comment>
<comment type="cofactor">
    <cofactor evidence="1">
        <name>a divalent metal cation</name>
        <dbReference type="ChEBI" id="CHEBI:60240"/>
    </cofactor>
</comment>
<comment type="pathway">
    <text evidence="1">Porphyrin-containing compound metabolism; protoporphyrin-IX biosynthesis; protoporphyrinogen-IX from coproporphyrinogen-III (O2 route): step 1/1.</text>
</comment>
<comment type="subunit">
    <text evidence="1">Homodimer.</text>
</comment>
<comment type="subcellular location">
    <subcellularLocation>
        <location evidence="1">Cytoplasm</location>
    </subcellularLocation>
</comment>
<comment type="similarity">
    <text evidence="1">Belongs to the aerobic coproporphyrinogen-III oxidase family.</text>
</comment>
<organism>
    <name type="scientific">Shewanella baltica (strain OS185)</name>
    <dbReference type="NCBI Taxonomy" id="402882"/>
    <lineage>
        <taxon>Bacteria</taxon>
        <taxon>Pseudomonadati</taxon>
        <taxon>Pseudomonadota</taxon>
        <taxon>Gammaproteobacteria</taxon>
        <taxon>Alteromonadales</taxon>
        <taxon>Shewanellaceae</taxon>
        <taxon>Shewanella</taxon>
    </lineage>
</organism>
<dbReference type="EC" id="1.3.3.3" evidence="1"/>
<dbReference type="EMBL" id="CP000753">
    <property type="protein sequence ID" value="ABS06206.1"/>
    <property type="molecule type" value="Genomic_DNA"/>
</dbReference>
<dbReference type="RefSeq" id="WP_011845358.1">
    <property type="nucleotide sequence ID" value="NC_009665.1"/>
</dbReference>
<dbReference type="SMR" id="A6WHB7"/>
<dbReference type="KEGG" id="sbm:Shew185_0033"/>
<dbReference type="HOGENOM" id="CLU_026169_0_1_6"/>
<dbReference type="UniPathway" id="UPA00251">
    <property type="reaction ID" value="UER00322"/>
</dbReference>
<dbReference type="GO" id="GO:0005737">
    <property type="term" value="C:cytoplasm"/>
    <property type="evidence" value="ECO:0007669"/>
    <property type="project" value="UniProtKB-SubCell"/>
</dbReference>
<dbReference type="GO" id="GO:0004109">
    <property type="term" value="F:coproporphyrinogen oxidase activity"/>
    <property type="evidence" value="ECO:0007669"/>
    <property type="project" value="UniProtKB-UniRule"/>
</dbReference>
<dbReference type="GO" id="GO:0046872">
    <property type="term" value="F:metal ion binding"/>
    <property type="evidence" value="ECO:0007669"/>
    <property type="project" value="UniProtKB-KW"/>
</dbReference>
<dbReference type="GO" id="GO:0042803">
    <property type="term" value="F:protein homodimerization activity"/>
    <property type="evidence" value="ECO:0000250"/>
    <property type="project" value="UniProtKB"/>
</dbReference>
<dbReference type="GO" id="GO:0006782">
    <property type="term" value="P:protoporphyrinogen IX biosynthetic process"/>
    <property type="evidence" value="ECO:0007669"/>
    <property type="project" value="UniProtKB-UniRule"/>
</dbReference>
<dbReference type="FunFam" id="3.40.1500.10:FF:000001">
    <property type="entry name" value="Oxygen-dependent coproporphyrinogen-III oxidase"/>
    <property type="match status" value="1"/>
</dbReference>
<dbReference type="Gene3D" id="3.40.1500.10">
    <property type="entry name" value="Coproporphyrinogen III oxidase, aerobic"/>
    <property type="match status" value="1"/>
</dbReference>
<dbReference type="HAMAP" id="MF_00333">
    <property type="entry name" value="Coprogen_oxidas"/>
    <property type="match status" value="1"/>
</dbReference>
<dbReference type="InterPro" id="IPR001260">
    <property type="entry name" value="Coprogen_oxidase_aer"/>
</dbReference>
<dbReference type="InterPro" id="IPR036406">
    <property type="entry name" value="Coprogen_oxidase_aer_sf"/>
</dbReference>
<dbReference type="InterPro" id="IPR018375">
    <property type="entry name" value="Coprogen_oxidase_CS"/>
</dbReference>
<dbReference type="NCBIfam" id="NF003727">
    <property type="entry name" value="PRK05330.1"/>
    <property type="match status" value="1"/>
</dbReference>
<dbReference type="PANTHER" id="PTHR10755">
    <property type="entry name" value="COPROPORPHYRINOGEN III OXIDASE, MITOCHONDRIAL"/>
    <property type="match status" value="1"/>
</dbReference>
<dbReference type="PANTHER" id="PTHR10755:SF0">
    <property type="entry name" value="OXYGEN-DEPENDENT COPROPORPHYRINOGEN-III OXIDASE, MITOCHONDRIAL"/>
    <property type="match status" value="1"/>
</dbReference>
<dbReference type="Pfam" id="PF01218">
    <property type="entry name" value="Coprogen_oxidas"/>
    <property type="match status" value="1"/>
</dbReference>
<dbReference type="PIRSF" id="PIRSF000166">
    <property type="entry name" value="Coproporphyri_ox"/>
    <property type="match status" value="1"/>
</dbReference>
<dbReference type="PRINTS" id="PR00073">
    <property type="entry name" value="COPRGNOXDASE"/>
</dbReference>
<dbReference type="SUPFAM" id="SSF102886">
    <property type="entry name" value="Coproporphyrinogen III oxidase"/>
    <property type="match status" value="1"/>
</dbReference>
<dbReference type="PROSITE" id="PS01021">
    <property type="entry name" value="COPROGEN_OXIDASE"/>
    <property type="match status" value="1"/>
</dbReference>